<evidence type="ECO:0000255" key="1"/>
<evidence type="ECO:0000256" key="2">
    <source>
        <dbReference type="SAM" id="MobiDB-lite"/>
    </source>
</evidence>
<evidence type="ECO:0000305" key="3"/>
<comment type="subcellular location">
    <subcellularLocation>
        <location evidence="3">Cell membrane</location>
        <topology evidence="3">Multi-pass membrane protein</topology>
    </subcellularLocation>
</comment>
<comment type="sequence caution" evidence="3">
    <conflict type="erroneous initiation">
        <sequence resource="EMBL-CDS" id="CAB11372"/>
    </conflict>
</comment>
<comment type="sequence caution" evidence="3">
    <conflict type="erroneous initiation">
        <sequence resource="EMBL-CDS" id="CAC31250"/>
    </conflict>
</comment>
<name>Y869_MYCLE</name>
<feature type="chain" id="PRO_0000103976" description="Uncharacterized protein ML0869">
    <location>
        <begin position="1"/>
        <end position="229"/>
    </location>
</feature>
<feature type="transmembrane region" description="Helical" evidence="1">
    <location>
        <begin position="137"/>
        <end position="157"/>
    </location>
</feature>
<feature type="transmembrane region" description="Helical" evidence="1">
    <location>
        <begin position="159"/>
        <end position="179"/>
    </location>
</feature>
<feature type="region of interest" description="Disordered" evidence="2">
    <location>
        <begin position="1"/>
        <end position="102"/>
    </location>
</feature>
<feature type="compositionally biased region" description="Basic residues" evidence="2">
    <location>
        <begin position="73"/>
        <end position="94"/>
    </location>
</feature>
<sequence length="229" mass="25437">MKLLGRKKSYGQDIETSDDNVGSEASLPDTLSRGSSTTAPKGRPTRKRDDADRRHTKKGPITPAPMTASEARARRKSLAPPKCHRAERRAKRAASKAQITDRRERMMAGEEAYLPPRDQGPVRRYIRDLVDARRNALGLFTPSALVLLFITFGVPQLQLYMSPAMLVLLSVMGIDGIILGRKISKLVDVKFPSNTESHWRLGLYAAGRASQMRRLRVPRPQVEHGSSVG</sequence>
<accession>Q9CCF6</accession>
<accession>O32952</accession>
<proteinExistence type="predicted"/>
<gene>
    <name type="ordered locus">ML0869</name>
    <name type="ORF">MLCB22.07</name>
</gene>
<reference key="1">
    <citation type="journal article" date="2001" name="Nature">
        <title>Massive gene decay in the leprosy bacillus.</title>
        <authorList>
            <person name="Cole S.T."/>
            <person name="Eiglmeier K."/>
            <person name="Parkhill J."/>
            <person name="James K.D."/>
            <person name="Thomson N.R."/>
            <person name="Wheeler P.R."/>
            <person name="Honore N."/>
            <person name="Garnier T."/>
            <person name="Churcher C.M."/>
            <person name="Harris D.E."/>
            <person name="Mungall K.L."/>
            <person name="Basham D."/>
            <person name="Brown D."/>
            <person name="Chillingworth T."/>
            <person name="Connor R."/>
            <person name="Davies R.M."/>
            <person name="Devlin K."/>
            <person name="Duthoy S."/>
            <person name="Feltwell T."/>
            <person name="Fraser A."/>
            <person name="Hamlin N."/>
            <person name="Holroyd S."/>
            <person name="Hornsby T."/>
            <person name="Jagels K."/>
            <person name="Lacroix C."/>
            <person name="Maclean J."/>
            <person name="Moule S."/>
            <person name="Murphy L.D."/>
            <person name="Oliver K."/>
            <person name="Quail M.A."/>
            <person name="Rajandream M.A."/>
            <person name="Rutherford K.M."/>
            <person name="Rutter S."/>
            <person name="Seeger K."/>
            <person name="Simon S."/>
            <person name="Simmonds M."/>
            <person name="Skelton J."/>
            <person name="Squares R."/>
            <person name="Squares S."/>
            <person name="Stevens K."/>
            <person name="Taylor K."/>
            <person name="Whitehead S."/>
            <person name="Woodward J.R."/>
            <person name="Barrell B.G."/>
        </authorList>
    </citation>
    <scope>NUCLEOTIDE SEQUENCE [LARGE SCALE GENOMIC DNA]</scope>
    <source>
        <strain>TN</strain>
    </source>
</reference>
<protein>
    <recommendedName>
        <fullName>Uncharacterized protein ML0869</fullName>
    </recommendedName>
</protein>
<organism>
    <name type="scientific">Mycobacterium leprae (strain TN)</name>
    <dbReference type="NCBI Taxonomy" id="272631"/>
    <lineage>
        <taxon>Bacteria</taxon>
        <taxon>Bacillati</taxon>
        <taxon>Actinomycetota</taxon>
        <taxon>Actinomycetes</taxon>
        <taxon>Mycobacteriales</taxon>
        <taxon>Mycobacteriaceae</taxon>
        <taxon>Mycobacterium</taxon>
    </lineage>
</organism>
<dbReference type="EMBL" id="AL583920">
    <property type="protein sequence ID" value="CAC31250.1"/>
    <property type="status" value="ALT_INIT"/>
    <property type="molecule type" value="Genomic_DNA"/>
</dbReference>
<dbReference type="EMBL" id="Z98741">
    <property type="protein sequence ID" value="CAB11372.1"/>
    <property type="status" value="ALT_INIT"/>
    <property type="molecule type" value="Genomic_DNA"/>
</dbReference>
<dbReference type="PIR" id="T44885">
    <property type="entry name" value="T44885"/>
</dbReference>
<dbReference type="STRING" id="272631.gene:17574695"/>
<dbReference type="KEGG" id="mle:ML0869"/>
<dbReference type="Leproma" id="ML0869"/>
<dbReference type="eggNOG" id="ENOG5031D67">
    <property type="taxonomic scope" value="Bacteria"/>
</dbReference>
<dbReference type="HOGENOM" id="CLU_091328_1_0_11"/>
<dbReference type="Proteomes" id="UP000000806">
    <property type="component" value="Chromosome"/>
</dbReference>
<dbReference type="GO" id="GO:0005886">
    <property type="term" value="C:plasma membrane"/>
    <property type="evidence" value="ECO:0007669"/>
    <property type="project" value="UniProtKB-SubCell"/>
</dbReference>
<dbReference type="InterPro" id="IPR021403">
    <property type="entry name" value="DUF3043"/>
</dbReference>
<dbReference type="Pfam" id="PF11241">
    <property type="entry name" value="DUF3043"/>
    <property type="match status" value="1"/>
</dbReference>
<keyword id="KW-1003">Cell membrane</keyword>
<keyword id="KW-0472">Membrane</keyword>
<keyword id="KW-1185">Reference proteome</keyword>
<keyword id="KW-0812">Transmembrane</keyword>
<keyword id="KW-1133">Transmembrane helix</keyword>